<organism>
    <name type="scientific">Perisphaeria ruficornis</name>
    <name type="common">Cockroach</name>
    <dbReference type="NCBI Taxonomy" id="521516"/>
    <lineage>
        <taxon>Eukaryota</taxon>
        <taxon>Metazoa</taxon>
        <taxon>Ecdysozoa</taxon>
        <taxon>Arthropoda</taxon>
        <taxon>Hexapoda</taxon>
        <taxon>Insecta</taxon>
        <taxon>Pterygota</taxon>
        <taxon>Neoptera</taxon>
        <taxon>Polyneoptera</taxon>
        <taxon>Dictyoptera</taxon>
        <taxon>Blattodea</taxon>
        <taxon>Blaberoidea</taxon>
        <taxon>Blaberidae</taxon>
        <taxon>Perisphaerinae</taxon>
        <taxon>Perisphaeria</taxon>
    </lineage>
</organism>
<name>PVK1_PERRU</name>
<keyword id="KW-0027">Amidation</keyword>
<keyword id="KW-0903">Direct protein sequencing</keyword>
<keyword id="KW-0527">Neuropeptide</keyword>
<keyword id="KW-0964">Secreted</keyword>
<evidence type="ECO:0000255" key="1"/>
<evidence type="ECO:0000269" key="2">
    <source>
    </source>
</evidence>
<evidence type="ECO:0000303" key="3">
    <source>
    </source>
</evidence>
<evidence type="ECO:0000305" key="4"/>
<accession>P85717</accession>
<dbReference type="GO" id="GO:0005576">
    <property type="term" value="C:extracellular region"/>
    <property type="evidence" value="ECO:0007669"/>
    <property type="project" value="UniProtKB-SubCell"/>
</dbReference>
<dbReference type="GO" id="GO:0007218">
    <property type="term" value="P:neuropeptide signaling pathway"/>
    <property type="evidence" value="ECO:0007669"/>
    <property type="project" value="UniProtKB-KW"/>
</dbReference>
<dbReference type="InterPro" id="IPR013231">
    <property type="entry name" value="Periviscerokinin"/>
</dbReference>
<dbReference type="Pfam" id="PF08259">
    <property type="entry name" value="Periviscerokin"/>
    <property type="match status" value="1"/>
</dbReference>
<protein>
    <recommendedName>
        <fullName evidence="3">Periviscerokinin-1</fullName>
        <shortName evidence="3">PerRu-PVK-1</shortName>
    </recommendedName>
</protein>
<feature type="peptide" id="PRO_0000378760" description="Periviscerokinin-1" evidence="2">
    <location>
        <begin position="1"/>
        <end position="11"/>
    </location>
</feature>
<feature type="modified residue" description="Threonine amide" evidence="2">
    <location>
        <position position="11"/>
    </location>
</feature>
<comment type="function">
    <text evidence="4">Mediates visceral muscle contractile activity (myotropic activity).</text>
</comment>
<comment type="subcellular location">
    <subcellularLocation>
        <location evidence="4">Secreted</location>
    </subcellularLocation>
</comment>
<comment type="similarity">
    <text evidence="1">Belongs to the periviscerokinin family.</text>
</comment>
<sequence length="11" mass="1091">GSSGLIPFGRT</sequence>
<proteinExistence type="evidence at protein level"/>
<reference evidence="4" key="1">
    <citation type="journal article" date="2009" name="BMC Evol. Biol.">
        <title>A proteomic approach for studying insect phylogeny: CAPA peptides of ancient insect taxa (Dictyoptera, Blattoptera) as a test case.</title>
        <authorList>
            <person name="Roth S."/>
            <person name="Fromm B."/>
            <person name="Gaede G."/>
            <person name="Predel R."/>
        </authorList>
    </citation>
    <scope>PROTEIN SEQUENCE</scope>
    <scope>AMIDATION AT THR-11</scope>
    <source>
        <tissue evidence="2">Abdominal perisympathetic organs</tissue>
    </source>
</reference>